<feature type="chain" id="PRO_0000142201" description="Putative imidazole glycerol phosphate synthase subunit hisF2">
    <location>
        <begin position="1"/>
        <end position="261"/>
    </location>
</feature>
<feature type="active site" evidence="2">
    <location>
        <position position="138"/>
    </location>
</feature>
<keyword id="KW-0028">Amino-acid biosynthesis</keyword>
<keyword id="KW-0963">Cytoplasm</keyword>
<keyword id="KW-0368">Histidine biosynthesis</keyword>
<keyword id="KW-0456">Lyase</keyword>
<keyword id="KW-1185">Reference proteome</keyword>
<name>HIS62_PROMM</name>
<comment type="function">
    <text evidence="1">IGPS catalyzes the conversion of PRFAR and glutamine to IGP, AICAR and glutamate. The HisF subunit catalyzes the cyclization activity that produces IGP and AICAR from PRFAR using the ammonia provided by the HisH subunit (By similarity).</text>
</comment>
<comment type="catalytic activity">
    <reaction>
        <text>5-[(5-phospho-1-deoxy-D-ribulos-1-ylimino)methylamino]-1-(5-phospho-beta-D-ribosyl)imidazole-4-carboxamide + L-glutamine = D-erythro-1-(imidazol-4-yl)glycerol 3-phosphate + 5-amino-1-(5-phospho-beta-D-ribosyl)imidazole-4-carboxamide + L-glutamate + H(+)</text>
        <dbReference type="Rhea" id="RHEA:24793"/>
        <dbReference type="ChEBI" id="CHEBI:15378"/>
        <dbReference type="ChEBI" id="CHEBI:29985"/>
        <dbReference type="ChEBI" id="CHEBI:58278"/>
        <dbReference type="ChEBI" id="CHEBI:58359"/>
        <dbReference type="ChEBI" id="CHEBI:58475"/>
        <dbReference type="ChEBI" id="CHEBI:58525"/>
        <dbReference type="EC" id="4.3.2.10"/>
    </reaction>
</comment>
<comment type="pathway">
    <text>Amino-acid biosynthesis; L-histidine biosynthesis; L-histidine from 5-phospho-alpha-D-ribose 1-diphosphate: step 5/9.</text>
</comment>
<comment type="subunit">
    <text evidence="1">Heterodimer of HisH and HisF.</text>
</comment>
<comment type="subcellular location">
    <subcellularLocation>
        <location evidence="1">Cytoplasm</location>
    </subcellularLocation>
</comment>
<comment type="similarity">
    <text evidence="3">Belongs to the HisA/HisF family.</text>
</comment>
<comment type="caution">
    <text evidence="3">The potential active site Asp residue in position 11 is replaced by a Gln.</text>
</comment>
<protein>
    <recommendedName>
        <fullName>Putative imidazole glycerol phosphate synthase subunit hisF2</fullName>
        <ecNumber>4.3.2.10</ecNumber>
    </recommendedName>
    <alternativeName>
        <fullName>IGP synthase cyclase subunit</fullName>
    </alternativeName>
    <alternativeName>
        <fullName>IGP synthase subunit hisF2</fullName>
    </alternativeName>
    <alternativeName>
        <fullName>ImGP synthase subunit hisF2</fullName>
        <shortName>IGPS subunit hisF2</shortName>
    </alternativeName>
</protein>
<organism>
    <name type="scientific">Prochlorococcus marinus (strain MIT 9313)</name>
    <dbReference type="NCBI Taxonomy" id="74547"/>
    <lineage>
        <taxon>Bacteria</taxon>
        <taxon>Bacillati</taxon>
        <taxon>Cyanobacteriota</taxon>
        <taxon>Cyanophyceae</taxon>
        <taxon>Synechococcales</taxon>
        <taxon>Prochlorococcaceae</taxon>
        <taxon>Prochlorococcus</taxon>
    </lineage>
</organism>
<gene>
    <name type="primary">hisF2</name>
    <name type="ordered locus">PMT_0100</name>
</gene>
<accession>Q7V958</accession>
<evidence type="ECO:0000250" key="1"/>
<evidence type="ECO:0000255" key="2"/>
<evidence type="ECO:0000305" key="3"/>
<reference key="1">
    <citation type="journal article" date="2003" name="Nature">
        <title>Genome divergence in two Prochlorococcus ecotypes reflects oceanic niche differentiation.</title>
        <authorList>
            <person name="Rocap G."/>
            <person name="Larimer F.W."/>
            <person name="Lamerdin J.E."/>
            <person name="Malfatti S."/>
            <person name="Chain P."/>
            <person name="Ahlgren N.A."/>
            <person name="Arellano A."/>
            <person name="Coleman M."/>
            <person name="Hauser L."/>
            <person name="Hess W.R."/>
            <person name="Johnson Z.I."/>
            <person name="Land M.L."/>
            <person name="Lindell D."/>
            <person name="Post A.F."/>
            <person name="Regala W."/>
            <person name="Shah M."/>
            <person name="Shaw S.L."/>
            <person name="Steglich C."/>
            <person name="Sullivan M.B."/>
            <person name="Ting C.S."/>
            <person name="Tolonen A."/>
            <person name="Webb E.A."/>
            <person name="Zinser E.R."/>
            <person name="Chisholm S.W."/>
        </authorList>
    </citation>
    <scope>NUCLEOTIDE SEQUENCE [LARGE SCALE GENOMIC DNA]</scope>
    <source>
        <strain>MIT 9313</strain>
    </source>
</reference>
<proteinExistence type="inferred from homology"/>
<sequence>MLKKRLIPKLQFSIKPSYRGPKPVLVITRQFDSKRAIGDPVSQAKIYEAQLADELVLVDLEGTSDSWPILLDTLSNMSESLATPLSVGGGITSFEQVQQLLDRGADKVVLNSGAVNNPQLIDLVANSYGSQCVVISIDIRKESDLSRHVYIDGGSTATDWSLFSWANDCASRGAGELLITSIDNDGTGTGLDLDSIRQLRYEVNLPLIASGGCGLAQHFVAGYEVGASAVAAGTFFSQRDQNPMQCRSHIRNAGLPIRLEQ</sequence>
<dbReference type="EC" id="4.3.2.10"/>
<dbReference type="EMBL" id="BX548175">
    <property type="protein sequence ID" value="CAE20275.1"/>
    <property type="molecule type" value="Genomic_DNA"/>
</dbReference>
<dbReference type="RefSeq" id="WP_011129479.1">
    <property type="nucleotide sequence ID" value="NC_005071.1"/>
</dbReference>
<dbReference type="SMR" id="Q7V958"/>
<dbReference type="KEGG" id="pmt:PMT_0100"/>
<dbReference type="eggNOG" id="COG0107">
    <property type="taxonomic scope" value="Bacteria"/>
</dbReference>
<dbReference type="HOGENOM" id="CLU_048577_4_0_3"/>
<dbReference type="OrthoDB" id="702at2"/>
<dbReference type="UniPathway" id="UPA00031">
    <property type="reaction ID" value="UER00010"/>
</dbReference>
<dbReference type="Proteomes" id="UP000001423">
    <property type="component" value="Chromosome"/>
</dbReference>
<dbReference type="GO" id="GO:0005737">
    <property type="term" value="C:cytoplasm"/>
    <property type="evidence" value="ECO:0007669"/>
    <property type="project" value="UniProtKB-SubCell"/>
</dbReference>
<dbReference type="GO" id="GO:0000107">
    <property type="term" value="F:imidazoleglycerol-phosphate synthase activity"/>
    <property type="evidence" value="ECO:0007669"/>
    <property type="project" value="InterPro"/>
</dbReference>
<dbReference type="GO" id="GO:0016829">
    <property type="term" value="F:lyase activity"/>
    <property type="evidence" value="ECO:0007669"/>
    <property type="project" value="UniProtKB-KW"/>
</dbReference>
<dbReference type="GO" id="GO:0000105">
    <property type="term" value="P:L-histidine biosynthetic process"/>
    <property type="evidence" value="ECO:0007669"/>
    <property type="project" value="UniProtKB-UniPathway"/>
</dbReference>
<dbReference type="CDD" id="cd04731">
    <property type="entry name" value="HisF"/>
    <property type="match status" value="1"/>
</dbReference>
<dbReference type="Gene3D" id="3.20.20.70">
    <property type="entry name" value="Aldolase class I"/>
    <property type="match status" value="1"/>
</dbReference>
<dbReference type="InterPro" id="IPR013785">
    <property type="entry name" value="Aldolase_TIM"/>
</dbReference>
<dbReference type="InterPro" id="IPR006062">
    <property type="entry name" value="His_biosynth"/>
</dbReference>
<dbReference type="InterPro" id="IPR004651">
    <property type="entry name" value="HisF"/>
</dbReference>
<dbReference type="InterPro" id="IPR050064">
    <property type="entry name" value="IGPS_HisA/HisF"/>
</dbReference>
<dbReference type="InterPro" id="IPR011060">
    <property type="entry name" value="RibuloseP-bd_barrel"/>
</dbReference>
<dbReference type="PANTHER" id="PTHR21235:SF2">
    <property type="entry name" value="IMIDAZOLE GLYCEROL PHOSPHATE SYNTHASE HISHF"/>
    <property type="match status" value="1"/>
</dbReference>
<dbReference type="PANTHER" id="PTHR21235">
    <property type="entry name" value="IMIDAZOLE GLYCEROL PHOSPHATE SYNTHASE SUBUNIT HISF/H IGP SYNTHASE SUBUNIT HISF/H"/>
    <property type="match status" value="1"/>
</dbReference>
<dbReference type="Pfam" id="PF00977">
    <property type="entry name" value="His_biosynth"/>
    <property type="match status" value="1"/>
</dbReference>
<dbReference type="SUPFAM" id="SSF51366">
    <property type="entry name" value="Ribulose-phoshate binding barrel"/>
    <property type="match status" value="1"/>
</dbReference>